<comment type="function">
    <text evidence="3">Component of the cytochrome c oxidase, the last enzyme in the mitochondrial electron transport chain which drives oxidative phosphorylation. The respiratory chain contains 3 multisubunit complexes succinate dehydrogenase (complex II, CII), ubiquinol-cytochrome c oxidoreductase (cytochrome b-c1 complex, complex III, CIII) and cytochrome c oxidase (complex IV, CIV), that cooperate to transfer electrons derived from NADH and succinate to molecular oxygen, creating an electrochemical gradient over the inner membrane that drives transmembrane transport and the ATP synthase. Cytochrome c oxidase is the component of the respiratory chain that catalyzes the reduction of oxygen to water. Electrons originating from reduced cytochrome c in the intermembrane space (IMS) are transferred via the dinuclear copper A center (CU(A)) of subunit 2 and heme A of subunit 1 to the active site in subunit 1, a binuclear center (BNC) formed by heme A3 and copper B (CU(B)). The BNC reduces molecular oxygen to 2 water molecules using 4 electrons from cytochrome c in the IMS and 4 protons from the mitochondrial matrix.</text>
</comment>
<comment type="catalytic activity">
    <reaction evidence="3">
        <text>4 Fe(II)-[cytochrome c] + O2 + 8 H(+)(in) = 4 Fe(III)-[cytochrome c] + 2 H2O + 4 H(+)(out)</text>
        <dbReference type="Rhea" id="RHEA:11436"/>
        <dbReference type="Rhea" id="RHEA-COMP:10350"/>
        <dbReference type="Rhea" id="RHEA-COMP:14399"/>
        <dbReference type="ChEBI" id="CHEBI:15377"/>
        <dbReference type="ChEBI" id="CHEBI:15378"/>
        <dbReference type="ChEBI" id="CHEBI:15379"/>
        <dbReference type="ChEBI" id="CHEBI:29033"/>
        <dbReference type="ChEBI" id="CHEBI:29034"/>
        <dbReference type="EC" id="7.1.1.9"/>
    </reaction>
    <physiologicalReaction direction="left-to-right" evidence="3">
        <dbReference type="Rhea" id="RHEA:11437"/>
    </physiologicalReaction>
</comment>
<comment type="cofactor">
    <cofactor evidence="4">
        <name>Cu cation</name>
        <dbReference type="ChEBI" id="CHEBI:23378"/>
    </cofactor>
    <text evidence="4">Binds a dinuclear copper A center per subunit.</text>
</comment>
<comment type="subunit">
    <text evidence="1 4">Component of the cytochrome c oxidase (complex IV, CIV), a multisubunit enzyme composed of 14 subunits. The complex is composed of a catalytic core of 3 subunits MT-CO1, MT-CO2 and MT-CO3, encoded in the mitochondrial DNA, and 11 supernumerary subunits COX4I, COX5A, COX5B, COX6A, COX6B, COX6C, COX7A, COX7B, COX7C, COX8 and NDUFA4, which are encoded in the nuclear genome. The complex exists as a monomer or a dimer and forms supercomplexes (SCs) in the inner mitochondrial membrane with NADH-ubiquinone oxidoreductase (complex I, CI) and ubiquinol-cytochrome c oxidoreductase (cytochrome b-c1 complex, complex III, CIII), resulting in different assemblies (supercomplex SCI(1)III(2)IV(1) and megacomplex MCI(2)III(2)IV(2)) (By similarity). Found in a complex with TMEM177, COA6, COX18, COX20, SCO1 and SCO2. Interacts with TMEM177 in a COX20-dependent manner. Interacts with COX20. Interacts with COX16 (By similarity).</text>
</comment>
<comment type="subcellular location">
    <subcellularLocation>
        <location evidence="4">Mitochondrion inner membrane</location>
        <topology evidence="4">Multi-pass membrane protein</topology>
    </subcellularLocation>
</comment>
<comment type="similarity">
    <text evidence="5">Belongs to the cytochrome c oxidase subunit 2 family.</text>
</comment>
<proteinExistence type="inferred from homology"/>
<organism>
    <name type="scientific">Carlito syrichta</name>
    <name type="common">Philippine tarsier</name>
    <name type="synonym">Tarsius syrichta</name>
    <dbReference type="NCBI Taxonomy" id="1868482"/>
    <lineage>
        <taxon>Eukaryota</taxon>
        <taxon>Metazoa</taxon>
        <taxon>Chordata</taxon>
        <taxon>Craniata</taxon>
        <taxon>Vertebrata</taxon>
        <taxon>Euteleostomi</taxon>
        <taxon>Mammalia</taxon>
        <taxon>Eutheria</taxon>
        <taxon>Euarchontoglires</taxon>
        <taxon>Primates</taxon>
        <taxon>Haplorrhini</taxon>
        <taxon>Tarsiiformes</taxon>
        <taxon>Tarsiidae</taxon>
        <taxon>Carlito</taxon>
    </lineage>
</organism>
<sequence length="227" mass="26011">MTHPLQLGFQDATSPIMEELLHFHDHTLMIVFLISSLVLYIITLMLTTKLTHTSTMDAQEVETVWTILPAIILILIALPSLRILYMMDEINNPLLTVKTMGHQWYWSYEYTDYEDLNFDSYMVPTTDLKPGELRLLEVDNRVVLPMEVPIRMLISSEDVLHSWAVPSLGLKTDAIPGRLNQTTLTSTRPGLYYGQCSEICGSNHSFMPIVLELVPLKYFEDWSVSMT</sequence>
<evidence type="ECO:0000250" key="1">
    <source>
        <dbReference type="UniProtKB" id="P00403"/>
    </source>
</evidence>
<evidence type="ECO:0000250" key="2">
    <source>
        <dbReference type="UniProtKB" id="P00406"/>
    </source>
</evidence>
<evidence type="ECO:0000250" key="3">
    <source>
        <dbReference type="UniProtKB" id="P00410"/>
    </source>
</evidence>
<evidence type="ECO:0000250" key="4">
    <source>
        <dbReference type="UniProtKB" id="P68530"/>
    </source>
</evidence>
<evidence type="ECO:0000305" key="5"/>
<name>COX2_CARSF</name>
<feature type="chain" id="PRO_0000183701" description="Cytochrome c oxidase subunit 2">
    <location>
        <begin position="1"/>
        <end position="227"/>
    </location>
</feature>
<feature type="topological domain" description="Mitochondrial intermembrane" evidence="4">
    <location>
        <begin position="1"/>
        <end position="14"/>
    </location>
</feature>
<feature type="transmembrane region" description="Helical; Name=I" evidence="4">
    <location>
        <begin position="15"/>
        <end position="45"/>
    </location>
</feature>
<feature type="topological domain" description="Mitochondrial matrix" evidence="4">
    <location>
        <begin position="46"/>
        <end position="59"/>
    </location>
</feature>
<feature type="transmembrane region" description="Helical; Name=II" evidence="4">
    <location>
        <begin position="60"/>
        <end position="87"/>
    </location>
</feature>
<feature type="topological domain" description="Mitochondrial intermembrane" evidence="4">
    <location>
        <begin position="88"/>
        <end position="227"/>
    </location>
</feature>
<feature type="binding site" evidence="4">
    <location>
        <position position="161"/>
    </location>
    <ligand>
        <name>Cu cation</name>
        <dbReference type="ChEBI" id="CHEBI:23378"/>
        <label>A1</label>
    </ligand>
</feature>
<feature type="binding site" evidence="4">
    <location>
        <position position="196"/>
    </location>
    <ligand>
        <name>Cu cation</name>
        <dbReference type="ChEBI" id="CHEBI:23378"/>
        <label>A1</label>
    </ligand>
</feature>
<feature type="binding site" evidence="4">
    <location>
        <position position="196"/>
    </location>
    <ligand>
        <name>Cu cation</name>
        <dbReference type="ChEBI" id="CHEBI:23378"/>
        <label>A2</label>
    </ligand>
</feature>
<feature type="binding site" evidence="4">
    <location>
        <position position="198"/>
    </location>
    <ligand>
        <name>Cu cation</name>
        <dbReference type="ChEBI" id="CHEBI:23378"/>
        <label>A2</label>
    </ligand>
</feature>
<feature type="binding site" evidence="4">
    <location>
        <position position="198"/>
    </location>
    <ligand>
        <name>Mg(2+)</name>
        <dbReference type="ChEBI" id="CHEBI:18420"/>
        <note>ligand shared with MT-CO1</note>
    </ligand>
</feature>
<feature type="binding site" evidence="4">
    <location>
        <position position="200"/>
    </location>
    <ligand>
        <name>Cu cation</name>
        <dbReference type="ChEBI" id="CHEBI:23378"/>
        <label>A1</label>
    </ligand>
</feature>
<feature type="binding site" evidence="4">
    <location>
        <position position="200"/>
    </location>
    <ligand>
        <name>Cu cation</name>
        <dbReference type="ChEBI" id="CHEBI:23378"/>
        <label>A2</label>
    </ligand>
</feature>
<feature type="binding site" evidence="4">
    <location>
        <position position="204"/>
    </location>
    <ligand>
        <name>Cu cation</name>
        <dbReference type="ChEBI" id="CHEBI:23378"/>
        <label>A2</label>
    </ligand>
</feature>
<feature type="binding site" evidence="4">
    <location>
        <position position="207"/>
    </location>
    <ligand>
        <name>Cu cation</name>
        <dbReference type="ChEBI" id="CHEBI:23378"/>
        <label>A1</label>
    </ligand>
</feature>
<feature type="modified residue" description="Phosphotyrosine" evidence="2">
    <location>
        <position position="218"/>
    </location>
</feature>
<gene>
    <name type="primary">MT-CO2</name>
    <name type="synonym">COII</name>
    <name type="synonym">COX2</name>
    <name type="synonym">COXII</name>
    <name type="synonym">MTCO2</name>
</gene>
<dbReference type="EC" id="7.1.1.9"/>
<dbReference type="EMBL" id="L22784">
    <property type="protein sequence ID" value="AAA20571.1"/>
    <property type="molecule type" value="Genomic_DNA"/>
</dbReference>
<dbReference type="PIR" id="I61845">
    <property type="entry name" value="I61845"/>
</dbReference>
<dbReference type="RefSeq" id="YP_002929467.1">
    <property type="nucleotide sequence ID" value="NC_012774.1"/>
</dbReference>
<dbReference type="SMR" id="P98046"/>
<dbReference type="STRING" id="1868482.ENSTSYP00000013699"/>
<dbReference type="GeneID" id="7944469"/>
<dbReference type="KEGG" id="csyr:7944469"/>
<dbReference type="CTD" id="4513"/>
<dbReference type="HOGENOM" id="CLU_036876_2_3_1"/>
<dbReference type="OMA" id="WSYEYTD"/>
<dbReference type="OrthoDB" id="539285at2759"/>
<dbReference type="Proteomes" id="UP000189704">
    <property type="component" value="Mitochondrion MT"/>
</dbReference>
<dbReference type="GO" id="GO:0005743">
    <property type="term" value="C:mitochondrial inner membrane"/>
    <property type="evidence" value="ECO:0007669"/>
    <property type="project" value="UniProtKB-SubCell"/>
</dbReference>
<dbReference type="GO" id="GO:0045277">
    <property type="term" value="C:respiratory chain complex IV"/>
    <property type="evidence" value="ECO:0000250"/>
    <property type="project" value="UniProtKB"/>
</dbReference>
<dbReference type="GO" id="GO:0005507">
    <property type="term" value="F:copper ion binding"/>
    <property type="evidence" value="ECO:0007669"/>
    <property type="project" value="InterPro"/>
</dbReference>
<dbReference type="GO" id="GO:0004129">
    <property type="term" value="F:cytochrome-c oxidase activity"/>
    <property type="evidence" value="ECO:0007669"/>
    <property type="project" value="UniProtKB-EC"/>
</dbReference>
<dbReference type="GO" id="GO:0042773">
    <property type="term" value="P:ATP synthesis coupled electron transport"/>
    <property type="evidence" value="ECO:0007669"/>
    <property type="project" value="TreeGrafter"/>
</dbReference>
<dbReference type="CDD" id="cd13912">
    <property type="entry name" value="CcO_II_C"/>
    <property type="match status" value="1"/>
</dbReference>
<dbReference type="FunFam" id="1.10.287.90:FF:000001">
    <property type="entry name" value="Cytochrome c oxidase subunit 2"/>
    <property type="match status" value="1"/>
</dbReference>
<dbReference type="FunFam" id="2.60.40.420:FF:000001">
    <property type="entry name" value="Cytochrome c oxidase subunit 2"/>
    <property type="match status" value="1"/>
</dbReference>
<dbReference type="Gene3D" id="1.10.287.90">
    <property type="match status" value="1"/>
</dbReference>
<dbReference type="Gene3D" id="2.60.40.420">
    <property type="entry name" value="Cupredoxins - blue copper proteins"/>
    <property type="match status" value="1"/>
</dbReference>
<dbReference type="InterPro" id="IPR045187">
    <property type="entry name" value="CcO_II"/>
</dbReference>
<dbReference type="InterPro" id="IPR002429">
    <property type="entry name" value="CcO_II-like_C"/>
</dbReference>
<dbReference type="InterPro" id="IPR034210">
    <property type="entry name" value="CcO_II_C"/>
</dbReference>
<dbReference type="InterPro" id="IPR001505">
    <property type="entry name" value="Copper_CuA"/>
</dbReference>
<dbReference type="InterPro" id="IPR008972">
    <property type="entry name" value="Cupredoxin"/>
</dbReference>
<dbReference type="InterPro" id="IPR014222">
    <property type="entry name" value="Cyt_c_oxidase_su2"/>
</dbReference>
<dbReference type="InterPro" id="IPR011759">
    <property type="entry name" value="Cyt_c_oxidase_su2_TM_dom"/>
</dbReference>
<dbReference type="InterPro" id="IPR036257">
    <property type="entry name" value="Cyt_c_oxidase_su2_TM_sf"/>
</dbReference>
<dbReference type="NCBIfam" id="TIGR02866">
    <property type="entry name" value="CoxB"/>
    <property type="match status" value="1"/>
</dbReference>
<dbReference type="PANTHER" id="PTHR22888:SF9">
    <property type="entry name" value="CYTOCHROME C OXIDASE SUBUNIT 2"/>
    <property type="match status" value="1"/>
</dbReference>
<dbReference type="PANTHER" id="PTHR22888">
    <property type="entry name" value="CYTOCHROME C OXIDASE, SUBUNIT II"/>
    <property type="match status" value="1"/>
</dbReference>
<dbReference type="Pfam" id="PF00116">
    <property type="entry name" value="COX2"/>
    <property type="match status" value="1"/>
</dbReference>
<dbReference type="Pfam" id="PF02790">
    <property type="entry name" value="COX2_TM"/>
    <property type="match status" value="1"/>
</dbReference>
<dbReference type="PRINTS" id="PR01166">
    <property type="entry name" value="CYCOXIDASEII"/>
</dbReference>
<dbReference type="SUPFAM" id="SSF49503">
    <property type="entry name" value="Cupredoxins"/>
    <property type="match status" value="1"/>
</dbReference>
<dbReference type="SUPFAM" id="SSF81464">
    <property type="entry name" value="Cytochrome c oxidase subunit II-like, transmembrane region"/>
    <property type="match status" value="1"/>
</dbReference>
<dbReference type="PROSITE" id="PS00078">
    <property type="entry name" value="COX2"/>
    <property type="match status" value="1"/>
</dbReference>
<dbReference type="PROSITE" id="PS50857">
    <property type="entry name" value="COX2_CUA"/>
    <property type="match status" value="1"/>
</dbReference>
<dbReference type="PROSITE" id="PS50999">
    <property type="entry name" value="COX2_TM"/>
    <property type="match status" value="1"/>
</dbReference>
<reference key="1">
    <citation type="journal article" date="1994" name="J. Mol. Evol.">
        <title>Evolution of the primate cytochrome c oxidase subunit II gene.</title>
        <authorList>
            <person name="Adkins R.M."/>
            <person name="Honeycutt R.L."/>
        </authorList>
    </citation>
    <scope>NUCLEOTIDE SEQUENCE [GENOMIC DNA]</scope>
</reference>
<accession>P98046</accession>
<keyword id="KW-0186">Copper</keyword>
<keyword id="KW-0249">Electron transport</keyword>
<keyword id="KW-0460">Magnesium</keyword>
<keyword id="KW-0472">Membrane</keyword>
<keyword id="KW-0479">Metal-binding</keyword>
<keyword id="KW-0496">Mitochondrion</keyword>
<keyword id="KW-0999">Mitochondrion inner membrane</keyword>
<keyword id="KW-0597">Phosphoprotein</keyword>
<keyword id="KW-1185">Reference proteome</keyword>
<keyword id="KW-0679">Respiratory chain</keyword>
<keyword id="KW-1278">Translocase</keyword>
<keyword id="KW-0812">Transmembrane</keyword>
<keyword id="KW-1133">Transmembrane helix</keyword>
<keyword id="KW-0813">Transport</keyword>
<geneLocation type="mitochondrion"/>
<protein>
    <recommendedName>
        <fullName>Cytochrome c oxidase subunit 2</fullName>
        <ecNumber>7.1.1.9</ecNumber>
    </recommendedName>
    <alternativeName>
        <fullName>Cytochrome c oxidase polypeptide II</fullName>
    </alternativeName>
</protein>